<name>ASTB_ALISL</name>
<proteinExistence type="inferred from homology"/>
<reference key="1">
    <citation type="journal article" date="2008" name="BMC Genomics">
        <title>The genome sequence of the fish pathogen Aliivibrio salmonicida strain LFI1238 shows extensive evidence of gene decay.</title>
        <authorList>
            <person name="Hjerde E."/>
            <person name="Lorentzen M.S."/>
            <person name="Holden M.T."/>
            <person name="Seeger K."/>
            <person name="Paulsen S."/>
            <person name="Bason N."/>
            <person name="Churcher C."/>
            <person name="Harris D."/>
            <person name="Norbertczak H."/>
            <person name="Quail M.A."/>
            <person name="Sanders S."/>
            <person name="Thurston S."/>
            <person name="Parkhill J."/>
            <person name="Willassen N.P."/>
            <person name="Thomson N.R."/>
        </authorList>
    </citation>
    <scope>NUCLEOTIDE SEQUENCE [LARGE SCALE GENOMIC DNA]</scope>
    <source>
        <strain>LFI1238</strain>
    </source>
</reference>
<gene>
    <name evidence="1" type="primary">astB</name>
    <name type="ordered locus">VSAL_II0073</name>
</gene>
<sequence>MKAVEANFDGLVGPTHNYSGLSVGNIASKNNKAGASNPKQAVKQGLEKMKALHDMGFVQGVLAPQERPDIATLRRLGFSGSDANVLQQSHQYSPQLLAACSSASSMWTANAATVSPSSDTADGKVHFTPANLINKFHRSIEDEVTGNILKATFADEKHFSHHEALPHSDYFGDEGAANHTRFCNEYGEQGVEFFVFGKSAFNDRYPAPKKYPARQTLEASEAIARTHGLRDKFTVFAQQNPDVIDQGVFHNDVIAVGNKNTLFCHQQAFLNQEQVKSDLSASYGSGFNVIEVPTDKVSLQDAVETYLFNSQLVTKSDGKTLIILPQHCRENPRVWAYLNELVEQKRGIDELHTFDLKQSMQNGGGPACLRLRVVLNEAEQQAVNQQTLMNDMLFSTLNAWADKHYRDRIEDKDLADPQLLLESRAALDELTQIMKLGSVYPFQR</sequence>
<accession>B6EQ59</accession>
<feature type="chain" id="PRO_1000138001" description="N-succinylarginine dihydrolase">
    <location>
        <begin position="1"/>
        <end position="444"/>
    </location>
</feature>
<feature type="active site" evidence="1">
    <location>
        <position position="174"/>
    </location>
</feature>
<feature type="active site" evidence="1">
    <location>
        <position position="250"/>
    </location>
</feature>
<feature type="active site" description="Nucleophile" evidence="1">
    <location>
        <position position="368"/>
    </location>
</feature>
<feature type="binding site" evidence="1">
    <location>
        <begin position="19"/>
        <end position="28"/>
    </location>
    <ligand>
        <name>substrate</name>
    </ligand>
</feature>
<feature type="binding site" evidence="1">
    <location>
        <position position="110"/>
    </location>
    <ligand>
        <name>substrate</name>
    </ligand>
</feature>
<feature type="binding site" evidence="1">
    <location>
        <begin position="137"/>
        <end position="138"/>
    </location>
    <ligand>
        <name>substrate</name>
    </ligand>
</feature>
<feature type="binding site" evidence="1">
    <location>
        <position position="214"/>
    </location>
    <ligand>
        <name>substrate</name>
    </ligand>
</feature>
<feature type="binding site" evidence="1">
    <location>
        <position position="252"/>
    </location>
    <ligand>
        <name>substrate</name>
    </ligand>
</feature>
<feature type="binding site" evidence="1">
    <location>
        <position position="362"/>
    </location>
    <ligand>
        <name>substrate</name>
    </ligand>
</feature>
<evidence type="ECO:0000255" key="1">
    <source>
        <dbReference type="HAMAP-Rule" id="MF_01172"/>
    </source>
</evidence>
<comment type="function">
    <text evidence="1">Catalyzes the hydrolysis of N(2)-succinylarginine into N(2)-succinylornithine, ammonia and CO(2).</text>
</comment>
<comment type="catalytic activity">
    <reaction evidence="1">
        <text>N(2)-succinyl-L-arginine + 2 H2O + 2 H(+) = N(2)-succinyl-L-ornithine + 2 NH4(+) + CO2</text>
        <dbReference type="Rhea" id="RHEA:19533"/>
        <dbReference type="ChEBI" id="CHEBI:15377"/>
        <dbReference type="ChEBI" id="CHEBI:15378"/>
        <dbReference type="ChEBI" id="CHEBI:16526"/>
        <dbReference type="ChEBI" id="CHEBI:28938"/>
        <dbReference type="ChEBI" id="CHEBI:58241"/>
        <dbReference type="ChEBI" id="CHEBI:58514"/>
        <dbReference type="EC" id="3.5.3.23"/>
    </reaction>
</comment>
<comment type="pathway">
    <text evidence="1">Amino-acid degradation; L-arginine degradation via AST pathway; L-glutamate and succinate from L-arginine: step 2/5.</text>
</comment>
<comment type="subunit">
    <text evidence="1">Homodimer.</text>
</comment>
<comment type="similarity">
    <text evidence="1">Belongs to the succinylarginine dihydrolase family.</text>
</comment>
<keyword id="KW-0056">Arginine metabolism</keyword>
<keyword id="KW-0378">Hydrolase</keyword>
<dbReference type="EC" id="3.5.3.23" evidence="1"/>
<dbReference type="EMBL" id="FM178380">
    <property type="protein sequence ID" value="CAQ80827.1"/>
    <property type="molecule type" value="Genomic_DNA"/>
</dbReference>
<dbReference type="RefSeq" id="WP_012551498.1">
    <property type="nucleotide sequence ID" value="NC_011313.1"/>
</dbReference>
<dbReference type="SMR" id="B6EQ59"/>
<dbReference type="KEGG" id="vsa:VSAL_II0073"/>
<dbReference type="eggNOG" id="COG3724">
    <property type="taxonomic scope" value="Bacteria"/>
</dbReference>
<dbReference type="HOGENOM" id="CLU_053835_0_0_6"/>
<dbReference type="UniPathway" id="UPA00185">
    <property type="reaction ID" value="UER00280"/>
</dbReference>
<dbReference type="Proteomes" id="UP000001730">
    <property type="component" value="Chromosome 2"/>
</dbReference>
<dbReference type="GO" id="GO:0009015">
    <property type="term" value="F:N-succinylarginine dihydrolase activity"/>
    <property type="evidence" value="ECO:0007669"/>
    <property type="project" value="UniProtKB-UniRule"/>
</dbReference>
<dbReference type="GO" id="GO:0019544">
    <property type="term" value="P:arginine catabolic process to glutamate"/>
    <property type="evidence" value="ECO:0007669"/>
    <property type="project" value="UniProtKB-UniRule"/>
</dbReference>
<dbReference type="GO" id="GO:0019545">
    <property type="term" value="P:arginine catabolic process to succinate"/>
    <property type="evidence" value="ECO:0007669"/>
    <property type="project" value="UniProtKB-UniRule"/>
</dbReference>
<dbReference type="Gene3D" id="3.75.10.20">
    <property type="entry name" value="Succinylarginine dihydrolase"/>
    <property type="match status" value="1"/>
</dbReference>
<dbReference type="HAMAP" id="MF_01172">
    <property type="entry name" value="AstB"/>
    <property type="match status" value="1"/>
</dbReference>
<dbReference type="InterPro" id="IPR037031">
    <property type="entry name" value="AstB_sf"/>
</dbReference>
<dbReference type="InterPro" id="IPR007079">
    <property type="entry name" value="SuccinylArg_d-Hdrlase_AstB"/>
</dbReference>
<dbReference type="NCBIfam" id="TIGR03241">
    <property type="entry name" value="arg_catab_astB"/>
    <property type="match status" value="1"/>
</dbReference>
<dbReference type="NCBIfam" id="NF009789">
    <property type="entry name" value="PRK13281.1"/>
    <property type="match status" value="1"/>
</dbReference>
<dbReference type="PANTHER" id="PTHR30420">
    <property type="entry name" value="N-SUCCINYLARGININE DIHYDROLASE"/>
    <property type="match status" value="1"/>
</dbReference>
<dbReference type="PANTHER" id="PTHR30420:SF2">
    <property type="entry name" value="N-SUCCINYLARGININE DIHYDROLASE"/>
    <property type="match status" value="1"/>
</dbReference>
<dbReference type="Pfam" id="PF04996">
    <property type="entry name" value="AstB"/>
    <property type="match status" value="1"/>
</dbReference>
<dbReference type="SUPFAM" id="SSF55909">
    <property type="entry name" value="Pentein"/>
    <property type="match status" value="1"/>
</dbReference>
<organism>
    <name type="scientific">Aliivibrio salmonicida (strain LFI1238)</name>
    <name type="common">Vibrio salmonicida (strain LFI1238)</name>
    <dbReference type="NCBI Taxonomy" id="316275"/>
    <lineage>
        <taxon>Bacteria</taxon>
        <taxon>Pseudomonadati</taxon>
        <taxon>Pseudomonadota</taxon>
        <taxon>Gammaproteobacteria</taxon>
        <taxon>Vibrionales</taxon>
        <taxon>Vibrionaceae</taxon>
        <taxon>Aliivibrio</taxon>
    </lineage>
</organism>
<protein>
    <recommendedName>
        <fullName evidence="1">N-succinylarginine dihydrolase</fullName>
        <ecNumber evidence="1">3.5.3.23</ecNumber>
    </recommendedName>
</protein>